<name>BETB2_RHIME</name>
<dbReference type="EC" id="1.2.1.8" evidence="1"/>
<dbReference type="EMBL" id="AE006469">
    <property type="protein sequence ID" value="AAK65610.1"/>
    <property type="status" value="ALT_INIT"/>
    <property type="molecule type" value="Genomic_DNA"/>
</dbReference>
<dbReference type="PIR" id="H95380">
    <property type="entry name" value="H95380"/>
</dbReference>
<dbReference type="RefSeq" id="NP_436198.1">
    <property type="nucleotide sequence ID" value="NC_003037.1"/>
</dbReference>
<dbReference type="SMR" id="Q92YD2"/>
<dbReference type="EnsemblBacteria" id="AAK65610">
    <property type="protein sequence ID" value="AAK65610"/>
    <property type="gene ID" value="SMa1731"/>
</dbReference>
<dbReference type="KEGG" id="sme:SMa1731"/>
<dbReference type="PATRIC" id="fig|266834.11.peg.981"/>
<dbReference type="HOGENOM" id="CLU_005391_0_1_5"/>
<dbReference type="OrthoDB" id="8175464at2"/>
<dbReference type="UniPathway" id="UPA00529">
    <property type="reaction ID" value="UER00386"/>
</dbReference>
<dbReference type="Proteomes" id="UP000001976">
    <property type="component" value="Plasmid pSymA"/>
</dbReference>
<dbReference type="GO" id="GO:0008802">
    <property type="term" value="F:betaine-aldehyde dehydrogenase (NAD+) activity"/>
    <property type="evidence" value="ECO:0007669"/>
    <property type="project" value="UniProtKB-UniRule"/>
</dbReference>
<dbReference type="GO" id="GO:0046872">
    <property type="term" value="F:metal ion binding"/>
    <property type="evidence" value="ECO:0007669"/>
    <property type="project" value="UniProtKB-KW"/>
</dbReference>
<dbReference type="GO" id="GO:0019285">
    <property type="term" value="P:glycine betaine biosynthetic process from choline"/>
    <property type="evidence" value="ECO:0007669"/>
    <property type="project" value="UniProtKB-UniRule"/>
</dbReference>
<dbReference type="FunFam" id="3.40.309.10:FF:000012">
    <property type="entry name" value="Betaine aldehyde dehydrogenase"/>
    <property type="match status" value="1"/>
</dbReference>
<dbReference type="FunFam" id="3.40.605.10:FF:000007">
    <property type="entry name" value="NAD/NADP-dependent betaine aldehyde dehydrogenase"/>
    <property type="match status" value="1"/>
</dbReference>
<dbReference type="Gene3D" id="3.40.605.10">
    <property type="entry name" value="Aldehyde Dehydrogenase, Chain A, domain 1"/>
    <property type="match status" value="1"/>
</dbReference>
<dbReference type="Gene3D" id="3.40.309.10">
    <property type="entry name" value="Aldehyde Dehydrogenase, Chain A, domain 2"/>
    <property type="match status" value="1"/>
</dbReference>
<dbReference type="HAMAP" id="MF_00804">
    <property type="entry name" value="BADH"/>
    <property type="match status" value="1"/>
</dbReference>
<dbReference type="InterPro" id="IPR016161">
    <property type="entry name" value="Ald_DH/histidinol_DH"/>
</dbReference>
<dbReference type="InterPro" id="IPR016163">
    <property type="entry name" value="Ald_DH_C"/>
</dbReference>
<dbReference type="InterPro" id="IPR016160">
    <property type="entry name" value="Ald_DH_CS_CYS"/>
</dbReference>
<dbReference type="InterPro" id="IPR029510">
    <property type="entry name" value="Ald_DH_CS_GLU"/>
</dbReference>
<dbReference type="InterPro" id="IPR016162">
    <property type="entry name" value="Ald_DH_N"/>
</dbReference>
<dbReference type="InterPro" id="IPR015590">
    <property type="entry name" value="Aldehyde_DH_dom"/>
</dbReference>
<dbReference type="InterPro" id="IPR011264">
    <property type="entry name" value="BADH"/>
</dbReference>
<dbReference type="NCBIfam" id="NF009725">
    <property type="entry name" value="PRK13252.1"/>
    <property type="match status" value="1"/>
</dbReference>
<dbReference type="PANTHER" id="PTHR11699">
    <property type="entry name" value="ALDEHYDE DEHYDROGENASE-RELATED"/>
    <property type="match status" value="1"/>
</dbReference>
<dbReference type="Pfam" id="PF00171">
    <property type="entry name" value="Aldedh"/>
    <property type="match status" value="1"/>
</dbReference>
<dbReference type="SUPFAM" id="SSF53720">
    <property type="entry name" value="ALDH-like"/>
    <property type="match status" value="1"/>
</dbReference>
<dbReference type="PROSITE" id="PS00070">
    <property type="entry name" value="ALDEHYDE_DEHYDR_CYS"/>
    <property type="match status" value="1"/>
</dbReference>
<dbReference type="PROSITE" id="PS00687">
    <property type="entry name" value="ALDEHYDE_DEHYDR_GLU"/>
    <property type="match status" value="1"/>
</dbReference>
<sequence>MATPLCQPAASHFIDGTFIEDRTGPEILSVNPVDGEIIAKLHGATSCIIEKAIASAKRAQKEWARKEPAERGRVLSRAADIMRARNRELSVLETRDTGKPISETLVADAASGADCLEYFGAIAATLSGDSIQFGEDWVYTRREPLGVCLGIGAWNYPIQIAAWKAAPALACGNAMIFKPSEVTPLSALKLAEILTEAGLPPGVFNIVQGAGDVGAELATHPAIAKVSLTGSVKTGARVASAAMAGIRPVTMELGGKSALIVFDDADVEAAVSGAILGNFYSAGQICSNGTRVFLQRGIREAFLARLLARVAALKIGDPMDEETDIGPLVSAAHRNRVATYVARAEVEGAYQMAPPRKLPPGDAWHEPVVFTNVTDWMTLAREEVFGPVMAVLDFDDEQDVVARANATDFGLAAGIFTRDLVRAHRLAAELEAGTVWINAYNLTPAGMAFGGIKRSGIGRENGRVAIDHYTQLKSVFVSMQT</sequence>
<feature type="chain" id="PRO_0000056554" description="Betaine aldehyde dehydrogenase 2">
    <location>
        <begin position="1"/>
        <end position="481"/>
    </location>
</feature>
<feature type="active site" description="Charge relay system" evidence="1">
    <location>
        <position position="164"/>
    </location>
</feature>
<feature type="active site" description="Proton acceptor" evidence="1">
    <location>
        <position position="252"/>
    </location>
</feature>
<feature type="active site" description="Nucleophile" evidence="1">
    <location>
        <position position="286"/>
    </location>
</feature>
<feature type="active site" description="Charge relay system" evidence="1">
    <location>
        <position position="460"/>
    </location>
</feature>
<feature type="binding site" evidence="1">
    <location>
        <position position="29"/>
    </location>
    <ligand>
        <name>K(+)</name>
        <dbReference type="ChEBI" id="CHEBI:29103"/>
        <label>1</label>
    </ligand>
</feature>
<feature type="binding site" evidence="1">
    <location>
        <position position="96"/>
    </location>
    <ligand>
        <name>K(+)</name>
        <dbReference type="ChEBI" id="CHEBI:29103"/>
        <label>1</label>
    </ligand>
</feature>
<feature type="binding site" evidence="1">
    <location>
        <begin position="152"/>
        <end position="154"/>
    </location>
    <ligand>
        <name>NAD(+)</name>
        <dbReference type="ChEBI" id="CHEBI:57540"/>
    </ligand>
</feature>
<feature type="binding site" evidence="1">
    <location>
        <begin position="178"/>
        <end position="181"/>
    </location>
    <ligand>
        <name>NAD(+)</name>
        <dbReference type="ChEBI" id="CHEBI:57540"/>
    </ligand>
</feature>
<feature type="binding site" evidence="1">
    <location>
        <position position="182"/>
    </location>
    <ligand>
        <name>K(+)</name>
        <dbReference type="ChEBI" id="CHEBI:29103"/>
        <label>1</label>
    </ligand>
</feature>
<feature type="binding site" evidence="1">
    <location>
        <begin position="231"/>
        <end position="234"/>
    </location>
    <ligand>
        <name>NAD(+)</name>
        <dbReference type="ChEBI" id="CHEBI:57540"/>
    </ligand>
</feature>
<feature type="binding site" evidence="1">
    <location>
        <position position="246"/>
    </location>
    <ligand>
        <name>K(+)</name>
        <dbReference type="ChEBI" id="CHEBI:29103"/>
        <label>2</label>
    </ligand>
</feature>
<feature type="binding site" evidence="1">
    <location>
        <position position="254"/>
    </location>
    <ligand>
        <name>NAD(+)</name>
        <dbReference type="ChEBI" id="CHEBI:57540"/>
    </ligand>
</feature>
<feature type="binding site" description="covalent" evidence="1">
    <location>
        <position position="286"/>
    </location>
    <ligand>
        <name>NAD(+)</name>
        <dbReference type="ChEBI" id="CHEBI:57540"/>
    </ligand>
</feature>
<feature type="binding site" evidence="1">
    <location>
        <position position="383"/>
    </location>
    <ligand>
        <name>NAD(+)</name>
        <dbReference type="ChEBI" id="CHEBI:57540"/>
    </ligand>
</feature>
<feature type="binding site" evidence="1">
    <location>
        <position position="453"/>
    </location>
    <ligand>
        <name>K(+)</name>
        <dbReference type="ChEBI" id="CHEBI:29103"/>
        <label>2</label>
    </ligand>
</feature>
<feature type="binding site" evidence="1">
    <location>
        <position position="456"/>
    </location>
    <ligand>
        <name>K(+)</name>
        <dbReference type="ChEBI" id="CHEBI:29103"/>
        <label>2</label>
    </ligand>
</feature>
<feature type="modified residue" description="Cysteine sulfenic acid (-SOH)" evidence="1">
    <location>
        <position position="286"/>
    </location>
</feature>
<protein>
    <recommendedName>
        <fullName evidence="1">Betaine aldehyde dehydrogenase 2</fullName>
        <shortName evidence="1">BADH 2</shortName>
        <ecNumber evidence="1">1.2.1.8</ecNumber>
    </recommendedName>
</protein>
<accession>Q92YD2</accession>
<comment type="function">
    <text evidence="1">Involved in the biosynthesis of the osmoprotectant glycine betaine. Catalyzes the irreversible oxidation of betaine aldehyde to the corresponding acid.</text>
</comment>
<comment type="catalytic activity">
    <reaction evidence="1">
        <text>betaine aldehyde + NAD(+) + H2O = glycine betaine + NADH + 2 H(+)</text>
        <dbReference type="Rhea" id="RHEA:15305"/>
        <dbReference type="ChEBI" id="CHEBI:15377"/>
        <dbReference type="ChEBI" id="CHEBI:15378"/>
        <dbReference type="ChEBI" id="CHEBI:15710"/>
        <dbReference type="ChEBI" id="CHEBI:17750"/>
        <dbReference type="ChEBI" id="CHEBI:57540"/>
        <dbReference type="ChEBI" id="CHEBI:57945"/>
        <dbReference type="EC" id="1.2.1.8"/>
    </reaction>
    <physiologicalReaction direction="left-to-right" evidence="1">
        <dbReference type="Rhea" id="RHEA:15306"/>
    </physiologicalReaction>
</comment>
<comment type="cofactor">
    <cofactor evidence="1">
        <name>K(+)</name>
        <dbReference type="ChEBI" id="CHEBI:29103"/>
    </cofactor>
    <text evidence="1">Binds 2 potassium ions per subunit.</text>
</comment>
<comment type="pathway">
    <text evidence="1">Amine and polyamine biosynthesis; betaine biosynthesis via choline pathway; betaine from betaine aldehyde: step 1/1.</text>
</comment>
<comment type="subunit">
    <text evidence="1">Dimer of dimers.</text>
</comment>
<comment type="similarity">
    <text evidence="1">Belongs to the aldehyde dehydrogenase family.</text>
</comment>
<comment type="sequence caution" evidence="2">
    <conflict type="erroneous initiation">
        <sequence resource="EMBL-CDS" id="AAK65610"/>
    </conflict>
    <text>Extended N-terminus.</text>
</comment>
<evidence type="ECO:0000255" key="1">
    <source>
        <dbReference type="HAMAP-Rule" id="MF_00804"/>
    </source>
</evidence>
<evidence type="ECO:0000305" key="2"/>
<organism>
    <name type="scientific">Rhizobium meliloti (strain 1021)</name>
    <name type="common">Ensifer meliloti</name>
    <name type="synonym">Sinorhizobium meliloti</name>
    <dbReference type="NCBI Taxonomy" id="266834"/>
    <lineage>
        <taxon>Bacteria</taxon>
        <taxon>Pseudomonadati</taxon>
        <taxon>Pseudomonadota</taxon>
        <taxon>Alphaproteobacteria</taxon>
        <taxon>Hyphomicrobiales</taxon>
        <taxon>Rhizobiaceae</taxon>
        <taxon>Sinorhizobium/Ensifer group</taxon>
        <taxon>Sinorhizobium</taxon>
    </lineage>
</organism>
<gene>
    <name evidence="1" type="primary">betB2</name>
    <name type="ordered locus">RA0952</name>
    <name type="ORF">SMa1731</name>
</gene>
<geneLocation type="plasmid">
    <name>pSymA</name>
    <name>megaplasmid 1</name>
</geneLocation>
<reference key="1">
    <citation type="journal article" date="2001" name="Proc. Natl. Acad. Sci. U.S.A.">
        <title>Nucleotide sequence and predicted functions of the entire Sinorhizobium meliloti pSymA megaplasmid.</title>
        <authorList>
            <person name="Barnett M.J."/>
            <person name="Fisher R.F."/>
            <person name="Jones T."/>
            <person name="Komp C."/>
            <person name="Abola A.P."/>
            <person name="Barloy-Hubler F."/>
            <person name="Bowser L."/>
            <person name="Capela D."/>
            <person name="Galibert F."/>
            <person name="Gouzy J."/>
            <person name="Gurjal M."/>
            <person name="Hong A."/>
            <person name="Huizar L."/>
            <person name="Hyman R.W."/>
            <person name="Kahn D."/>
            <person name="Kahn M.L."/>
            <person name="Kalman S."/>
            <person name="Keating D.H."/>
            <person name="Palm C."/>
            <person name="Peck M.C."/>
            <person name="Surzycki R."/>
            <person name="Wells D.H."/>
            <person name="Yeh K.-C."/>
            <person name="Davis R.W."/>
            <person name="Federspiel N.A."/>
            <person name="Long S.R."/>
        </authorList>
    </citation>
    <scope>NUCLEOTIDE SEQUENCE [LARGE SCALE GENOMIC DNA]</scope>
    <source>
        <strain>1021</strain>
    </source>
</reference>
<reference key="2">
    <citation type="journal article" date="2001" name="Science">
        <title>The composite genome of the legume symbiont Sinorhizobium meliloti.</title>
        <authorList>
            <person name="Galibert F."/>
            <person name="Finan T.M."/>
            <person name="Long S.R."/>
            <person name="Puehler A."/>
            <person name="Abola P."/>
            <person name="Ampe F."/>
            <person name="Barloy-Hubler F."/>
            <person name="Barnett M.J."/>
            <person name="Becker A."/>
            <person name="Boistard P."/>
            <person name="Bothe G."/>
            <person name="Boutry M."/>
            <person name="Bowser L."/>
            <person name="Buhrmester J."/>
            <person name="Cadieu E."/>
            <person name="Capela D."/>
            <person name="Chain P."/>
            <person name="Cowie A."/>
            <person name="Davis R.W."/>
            <person name="Dreano S."/>
            <person name="Federspiel N.A."/>
            <person name="Fisher R.F."/>
            <person name="Gloux S."/>
            <person name="Godrie T."/>
            <person name="Goffeau A."/>
            <person name="Golding B."/>
            <person name="Gouzy J."/>
            <person name="Gurjal M."/>
            <person name="Hernandez-Lucas I."/>
            <person name="Hong A."/>
            <person name="Huizar L."/>
            <person name="Hyman R.W."/>
            <person name="Jones T."/>
            <person name="Kahn D."/>
            <person name="Kahn M.L."/>
            <person name="Kalman S."/>
            <person name="Keating D.H."/>
            <person name="Kiss E."/>
            <person name="Komp C."/>
            <person name="Lelaure V."/>
            <person name="Masuy D."/>
            <person name="Palm C."/>
            <person name="Peck M.C."/>
            <person name="Pohl T.M."/>
            <person name="Portetelle D."/>
            <person name="Purnelle B."/>
            <person name="Ramsperger U."/>
            <person name="Surzycki R."/>
            <person name="Thebault P."/>
            <person name="Vandenbol M."/>
            <person name="Vorhoelter F.J."/>
            <person name="Weidner S."/>
            <person name="Wells D.H."/>
            <person name="Wong K."/>
            <person name="Yeh K.-C."/>
            <person name="Batut J."/>
        </authorList>
    </citation>
    <scope>NUCLEOTIDE SEQUENCE [LARGE SCALE GENOMIC DNA]</scope>
    <source>
        <strain>1021</strain>
    </source>
</reference>
<proteinExistence type="inferred from homology"/>
<keyword id="KW-0479">Metal-binding</keyword>
<keyword id="KW-0520">NAD</keyword>
<keyword id="KW-0521">NADP</keyword>
<keyword id="KW-0558">Oxidation</keyword>
<keyword id="KW-0560">Oxidoreductase</keyword>
<keyword id="KW-0614">Plasmid</keyword>
<keyword id="KW-0630">Potassium</keyword>
<keyword id="KW-1185">Reference proteome</keyword>